<name>RL11_SHOC1</name>
<comment type="function">
    <text evidence="1">Forms part of the ribosomal stalk which helps the ribosome interact with GTP-bound translation factors.</text>
</comment>
<comment type="subunit">
    <text evidence="1">Part of the ribosomal stalk of the 50S ribosomal subunit. Interacts with L10 and the large rRNA to form the base of the stalk. L10 forms an elongated spine to which L12 dimers bind in a sequential fashion forming a multimeric L10(L12)X complex.</text>
</comment>
<comment type="PTM">
    <text evidence="1">One or more lysine residues are methylated.</text>
</comment>
<comment type="similarity">
    <text evidence="1">Belongs to the universal ribosomal protein uL11 family.</text>
</comment>
<protein>
    <recommendedName>
        <fullName evidence="1">Large ribosomal subunit protein uL11</fullName>
    </recommendedName>
    <alternativeName>
        <fullName evidence="2">50S ribosomal protein L11</fullName>
    </alternativeName>
</protein>
<keyword id="KW-0488">Methylation</keyword>
<keyword id="KW-1185">Reference proteome</keyword>
<keyword id="KW-0687">Ribonucleoprotein</keyword>
<keyword id="KW-0689">Ribosomal protein</keyword>
<keyword id="KW-0694">RNA-binding</keyword>
<keyword id="KW-0699">rRNA-binding</keyword>
<sequence>MAKKVIKMVKLQIPAGKANPAPPVGPALGQAGVNIMGFCKEFNARTSDQAGLIIPVEITVFEDRSFTFITKTPPAAVLLKKAAGIDSGSGEPNRTKVATVKRDKVREIAETKMPDLNAASVEAAMRMVEGTARSMGIVIED</sequence>
<gene>
    <name evidence="1" type="primary">rplK</name>
    <name type="ordered locus">ABC0137</name>
</gene>
<reference key="1">
    <citation type="submission" date="2003-10" db="EMBL/GenBank/DDBJ databases">
        <title>The complete genome sequence of the alkaliphilic Bacillus clausii KSM-K16.</title>
        <authorList>
            <person name="Takaki Y."/>
            <person name="Kageyama Y."/>
            <person name="Shimamura S."/>
            <person name="Suzuki H."/>
            <person name="Nishi S."/>
            <person name="Hatada Y."/>
            <person name="Kawai S."/>
            <person name="Ito S."/>
            <person name="Horikoshi K."/>
        </authorList>
    </citation>
    <scope>NUCLEOTIDE SEQUENCE [LARGE SCALE GENOMIC DNA]</scope>
    <source>
        <strain>KSM-K16</strain>
    </source>
</reference>
<organism>
    <name type="scientific">Shouchella clausii (strain KSM-K16)</name>
    <name type="common">Alkalihalobacillus clausii</name>
    <dbReference type="NCBI Taxonomy" id="66692"/>
    <lineage>
        <taxon>Bacteria</taxon>
        <taxon>Bacillati</taxon>
        <taxon>Bacillota</taxon>
        <taxon>Bacilli</taxon>
        <taxon>Bacillales</taxon>
        <taxon>Bacillaceae</taxon>
        <taxon>Shouchella</taxon>
    </lineage>
</organism>
<proteinExistence type="inferred from homology"/>
<dbReference type="EMBL" id="AP006627">
    <property type="protein sequence ID" value="BAD62680.1"/>
    <property type="molecule type" value="Genomic_DNA"/>
</dbReference>
<dbReference type="SMR" id="Q5WLS5"/>
<dbReference type="STRING" id="66692.ABC0137"/>
<dbReference type="KEGG" id="bcl:ABC0137"/>
<dbReference type="eggNOG" id="COG0080">
    <property type="taxonomic scope" value="Bacteria"/>
</dbReference>
<dbReference type="HOGENOM" id="CLU_074237_2_1_9"/>
<dbReference type="OrthoDB" id="9802408at2"/>
<dbReference type="Proteomes" id="UP000001168">
    <property type="component" value="Chromosome"/>
</dbReference>
<dbReference type="GO" id="GO:0022625">
    <property type="term" value="C:cytosolic large ribosomal subunit"/>
    <property type="evidence" value="ECO:0007669"/>
    <property type="project" value="TreeGrafter"/>
</dbReference>
<dbReference type="GO" id="GO:0070180">
    <property type="term" value="F:large ribosomal subunit rRNA binding"/>
    <property type="evidence" value="ECO:0007669"/>
    <property type="project" value="UniProtKB-UniRule"/>
</dbReference>
<dbReference type="GO" id="GO:0003735">
    <property type="term" value="F:structural constituent of ribosome"/>
    <property type="evidence" value="ECO:0007669"/>
    <property type="project" value="InterPro"/>
</dbReference>
<dbReference type="GO" id="GO:0006412">
    <property type="term" value="P:translation"/>
    <property type="evidence" value="ECO:0007669"/>
    <property type="project" value="UniProtKB-UniRule"/>
</dbReference>
<dbReference type="CDD" id="cd00349">
    <property type="entry name" value="Ribosomal_L11"/>
    <property type="match status" value="1"/>
</dbReference>
<dbReference type="FunFam" id="1.10.10.250:FF:000001">
    <property type="entry name" value="50S ribosomal protein L11"/>
    <property type="match status" value="1"/>
</dbReference>
<dbReference type="FunFam" id="3.30.1550.10:FF:000001">
    <property type="entry name" value="50S ribosomal protein L11"/>
    <property type="match status" value="1"/>
</dbReference>
<dbReference type="Gene3D" id="1.10.10.250">
    <property type="entry name" value="Ribosomal protein L11, C-terminal domain"/>
    <property type="match status" value="1"/>
</dbReference>
<dbReference type="Gene3D" id="3.30.1550.10">
    <property type="entry name" value="Ribosomal protein L11/L12, N-terminal domain"/>
    <property type="match status" value="1"/>
</dbReference>
<dbReference type="HAMAP" id="MF_00736">
    <property type="entry name" value="Ribosomal_uL11"/>
    <property type="match status" value="1"/>
</dbReference>
<dbReference type="InterPro" id="IPR000911">
    <property type="entry name" value="Ribosomal_uL11"/>
</dbReference>
<dbReference type="InterPro" id="IPR006519">
    <property type="entry name" value="Ribosomal_uL11_bac-typ"/>
</dbReference>
<dbReference type="InterPro" id="IPR020783">
    <property type="entry name" value="Ribosomal_uL11_C"/>
</dbReference>
<dbReference type="InterPro" id="IPR036769">
    <property type="entry name" value="Ribosomal_uL11_C_sf"/>
</dbReference>
<dbReference type="InterPro" id="IPR020785">
    <property type="entry name" value="Ribosomal_uL11_CS"/>
</dbReference>
<dbReference type="InterPro" id="IPR020784">
    <property type="entry name" value="Ribosomal_uL11_N"/>
</dbReference>
<dbReference type="InterPro" id="IPR036796">
    <property type="entry name" value="Ribosomal_uL11_N_sf"/>
</dbReference>
<dbReference type="NCBIfam" id="TIGR01632">
    <property type="entry name" value="L11_bact"/>
    <property type="match status" value="1"/>
</dbReference>
<dbReference type="PANTHER" id="PTHR11661">
    <property type="entry name" value="60S RIBOSOMAL PROTEIN L12"/>
    <property type="match status" value="1"/>
</dbReference>
<dbReference type="PANTHER" id="PTHR11661:SF1">
    <property type="entry name" value="LARGE RIBOSOMAL SUBUNIT PROTEIN UL11M"/>
    <property type="match status" value="1"/>
</dbReference>
<dbReference type="Pfam" id="PF00298">
    <property type="entry name" value="Ribosomal_L11"/>
    <property type="match status" value="1"/>
</dbReference>
<dbReference type="Pfam" id="PF03946">
    <property type="entry name" value="Ribosomal_L11_N"/>
    <property type="match status" value="1"/>
</dbReference>
<dbReference type="SMART" id="SM00649">
    <property type="entry name" value="RL11"/>
    <property type="match status" value="1"/>
</dbReference>
<dbReference type="SUPFAM" id="SSF54747">
    <property type="entry name" value="Ribosomal L11/L12e N-terminal domain"/>
    <property type="match status" value="1"/>
</dbReference>
<dbReference type="SUPFAM" id="SSF46906">
    <property type="entry name" value="Ribosomal protein L11, C-terminal domain"/>
    <property type="match status" value="1"/>
</dbReference>
<dbReference type="PROSITE" id="PS00359">
    <property type="entry name" value="RIBOSOMAL_L11"/>
    <property type="match status" value="1"/>
</dbReference>
<evidence type="ECO:0000255" key="1">
    <source>
        <dbReference type="HAMAP-Rule" id="MF_00736"/>
    </source>
</evidence>
<evidence type="ECO:0000305" key="2"/>
<accession>Q5WLS5</accession>
<feature type="chain" id="PRO_0000104243" description="Large ribosomal subunit protein uL11">
    <location>
        <begin position="1"/>
        <end position="141"/>
    </location>
</feature>